<proteinExistence type="inferred from homology"/>
<dbReference type="EC" id="2.4.1.227" evidence="1"/>
<dbReference type="EMBL" id="CP000114">
    <property type="protein sequence ID" value="ABA45335.1"/>
    <property type="molecule type" value="Genomic_DNA"/>
</dbReference>
<dbReference type="RefSeq" id="WP_000516700.1">
    <property type="nucleotide sequence ID" value="NC_007432.1"/>
</dbReference>
<dbReference type="SMR" id="Q3K2P3"/>
<dbReference type="CAZy" id="GT28">
    <property type="family name" value="Glycosyltransferase Family 28"/>
</dbReference>
<dbReference type="KEGG" id="sak:SAK_0578"/>
<dbReference type="HOGENOM" id="CLU_037404_0_0_9"/>
<dbReference type="UniPathway" id="UPA00219"/>
<dbReference type="GO" id="GO:0005886">
    <property type="term" value="C:plasma membrane"/>
    <property type="evidence" value="ECO:0007669"/>
    <property type="project" value="UniProtKB-SubCell"/>
</dbReference>
<dbReference type="GO" id="GO:0050511">
    <property type="term" value="F:undecaprenyldiphospho-muramoylpentapeptide beta-N-acetylglucosaminyltransferase activity"/>
    <property type="evidence" value="ECO:0007669"/>
    <property type="project" value="UniProtKB-UniRule"/>
</dbReference>
<dbReference type="GO" id="GO:0005975">
    <property type="term" value="P:carbohydrate metabolic process"/>
    <property type="evidence" value="ECO:0007669"/>
    <property type="project" value="InterPro"/>
</dbReference>
<dbReference type="GO" id="GO:0051301">
    <property type="term" value="P:cell division"/>
    <property type="evidence" value="ECO:0007669"/>
    <property type="project" value="UniProtKB-KW"/>
</dbReference>
<dbReference type="GO" id="GO:0071555">
    <property type="term" value="P:cell wall organization"/>
    <property type="evidence" value="ECO:0007669"/>
    <property type="project" value="UniProtKB-KW"/>
</dbReference>
<dbReference type="GO" id="GO:0030259">
    <property type="term" value="P:lipid glycosylation"/>
    <property type="evidence" value="ECO:0007669"/>
    <property type="project" value="UniProtKB-UniRule"/>
</dbReference>
<dbReference type="GO" id="GO:0009252">
    <property type="term" value="P:peptidoglycan biosynthetic process"/>
    <property type="evidence" value="ECO:0007669"/>
    <property type="project" value="UniProtKB-UniRule"/>
</dbReference>
<dbReference type="GO" id="GO:0008360">
    <property type="term" value="P:regulation of cell shape"/>
    <property type="evidence" value="ECO:0007669"/>
    <property type="project" value="UniProtKB-KW"/>
</dbReference>
<dbReference type="CDD" id="cd03785">
    <property type="entry name" value="GT28_MurG"/>
    <property type="match status" value="1"/>
</dbReference>
<dbReference type="Gene3D" id="3.40.50.2000">
    <property type="entry name" value="Glycogen Phosphorylase B"/>
    <property type="match status" value="2"/>
</dbReference>
<dbReference type="HAMAP" id="MF_00033">
    <property type="entry name" value="MurG"/>
    <property type="match status" value="1"/>
</dbReference>
<dbReference type="InterPro" id="IPR006009">
    <property type="entry name" value="GlcNAc_MurG"/>
</dbReference>
<dbReference type="InterPro" id="IPR007235">
    <property type="entry name" value="Glyco_trans_28_C"/>
</dbReference>
<dbReference type="InterPro" id="IPR004276">
    <property type="entry name" value="GlycoTrans_28_N"/>
</dbReference>
<dbReference type="PANTHER" id="PTHR21015:SF27">
    <property type="entry name" value="UDP-N-ACETYLGLUCOSAMINE--N-ACETYLMURAMYL-(PENTAPEPTIDE) PYROPHOSPHORYL-UNDECAPRENOL N-ACETYLGLUCOSAMINE TRANSFERASE"/>
    <property type="match status" value="1"/>
</dbReference>
<dbReference type="PANTHER" id="PTHR21015">
    <property type="entry name" value="UDP-N-ACETYLGLUCOSAMINE--N-ACETYLMURAMYL-(PENTAPEPTIDE) PYROPHOSPHORYL-UNDECAPRENOL N-ACETYLGLUCOSAMINE TRANSFERASE 1"/>
    <property type="match status" value="1"/>
</dbReference>
<dbReference type="Pfam" id="PF04101">
    <property type="entry name" value="Glyco_tran_28_C"/>
    <property type="match status" value="1"/>
</dbReference>
<dbReference type="Pfam" id="PF03033">
    <property type="entry name" value="Glyco_transf_28"/>
    <property type="match status" value="1"/>
</dbReference>
<dbReference type="SUPFAM" id="SSF53756">
    <property type="entry name" value="UDP-Glycosyltransferase/glycogen phosphorylase"/>
    <property type="match status" value="1"/>
</dbReference>
<sequence length="358" mass="39971">MGKKIVFTGGGTVGHVTLNLILIPKFIKDGWEVHYIGDKNGIEHEQINQSGLDITFHSIATGKLRRYFSWQNMLDVFKVGVGVLQSIAIIAKLRPQALFSKGGFVSVPPVVAARLLKVPVFVHESDLSMGLANKIAYKFATIMYTTFEQSKDLIKTKHIGAVTKVMDCKKSFENTDLTSIKEAFDPNLKTLLFIGGSAGAKVFNDFITQTPELEEKYNVINISGDSSLNRLKKNLYRVDYVTDLYQPLMNLADVVVTRGGSNTIFELVAMKKLHLIIPLGREASRGDQLENAAYFEEKGYALQLPESELNINTLEKQINLLISNSESYEKNMSQSSEIKSQDEFYQLLIDDMAKVTKG</sequence>
<accession>Q3K2P3</accession>
<comment type="function">
    <text evidence="1">Cell wall formation. Catalyzes the transfer of a GlcNAc subunit on undecaprenyl-pyrophosphoryl-MurNAc-pentapeptide (lipid intermediate I) to form undecaprenyl-pyrophosphoryl-MurNAc-(pentapeptide)GlcNAc (lipid intermediate II).</text>
</comment>
<comment type="catalytic activity">
    <reaction evidence="1">
        <text>Mur2Ac(oyl-L-Ala-gamma-D-Glu-L-Lys-D-Ala-D-Ala)-di-trans,octa-cis-undecaprenyl diphosphate + UDP-N-acetyl-alpha-D-glucosamine = beta-D-GlcNAc-(1-&gt;4)-Mur2Ac(oyl-L-Ala-gamma-D-Glu-L-Lys-D-Ala-D-Ala)-di-trans,octa-cis-undecaprenyl diphosphate + UDP + H(+)</text>
        <dbReference type="Rhea" id="RHEA:23192"/>
        <dbReference type="ChEBI" id="CHEBI:15378"/>
        <dbReference type="ChEBI" id="CHEBI:57705"/>
        <dbReference type="ChEBI" id="CHEBI:58223"/>
        <dbReference type="ChEBI" id="CHEBI:60032"/>
        <dbReference type="ChEBI" id="CHEBI:60033"/>
        <dbReference type="EC" id="2.4.1.227"/>
    </reaction>
</comment>
<comment type="pathway">
    <text evidence="1">Cell wall biogenesis; peptidoglycan biosynthesis.</text>
</comment>
<comment type="subcellular location">
    <subcellularLocation>
        <location evidence="1">Cell membrane</location>
        <topology evidence="1">Peripheral membrane protein</topology>
        <orientation evidence="1">Cytoplasmic side</orientation>
    </subcellularLocation>
</comment>
<comment type="similarity">
    <text evidence="1">Belongs to the glycosyltransferase 28 family. MurG subfamily.</text>
</comment>
<keyword id="KW-0131">Cell cycle</keyword>
<keyword id="KW-0132">Cell division</keyword>
<keyword id="KW-1003">Cell membrane</keyword>
<keyword id="KW-0133">Cell shape</keyword>
<keyword id="KW-0961">Cell wall biogenesis/degradation</keyword>
<keyword id="KW-0328">Glycosyltransferase</keyword>
<keyword id="KW-0472">Membrane</keyword>
<keyword id="KW-0573">Peptidoglycan synthesis</keyword>
<keyword id="KW-0808">Transferase</keyword>
<protein>
    <recommendedName>
        <fullName evidence="1">UDP-N-acetylglucosamine--N-acetylmuramyl-(pentapeptide) pyrophosphoryl-undecaprenol N-acetylglucosamine transferase</fullName>
        <ecNumber evidence="1">2.4.1.227</ecNumber>
    </recommendedName>
    <alternativeName>
        <fullName evidence="1">Undecaprenyl-PP-MurNAc-pentapeptide-UDPGlcNAc GlcNAc transferase</fullName>
    </alternativeName>
</protein>
<organism>
    <name type="scientific">Streptococcus agalactiae serotype Ia (strain ATCC 27591 / A909 / CDC SS700)</name>
    <dbReference type="NCBI Taxonomy" id="205921"/>
    <lineage>
        <taxon>Bacteria</taxon>
        <taxon>Bacillati</taxon>
        <taxon>Bacillota</taxon>
        <taxon>Bacilli</taxon>
        <taxon>Lactobacillales</taxon>
        <taxon>Streptococcaceae</taxon>
        <taxon>Streptococcus</taxon>
    </lineage>
</organism>
<feature type="chain" id="PRO_0000225099" description="UDP-N-acetylglucosamine--N-acetylmuramyl-(pentapeptide) pyrophosphoryl-undecaprenol N-acetylglucosamine transferase">
    <location>
        <begin position="1"/>
        <end position="358"/>
    </location>
</feature>
<feature type="binding site" evidence="1">
    <location>
        <position position="197"/>
    </location>
    <ligand>
        <name>UDP-N-acetyl-alpha-D-glucosamine</name>
        <dbReference type="ChEBI" id="CHEBI:57705"/>
    </ligand>
</feature>
<feature type="binding site" evidence="1">
    <location>
        <position position="288"/>
    </location>
    <ligand>
        <name>UDP-N-acetyl-alpha-D-glucosamine</name>
        <dbReference type="ChEBI" id="CHEBI:57705"/>
    </ligand>
</feature>
<reference key="1">
    <citation type="journal article" date="2005" name="Proc. Natl. Acad. Sci. U.S.A.">
        <title>Genome analysis of multiple pathogenic isolates of Streptococcus agalactiae: implications for the microbial 'pan-genome'.</title>
        <authorList>
            <person name="Tettelin H."/>
            <person name="Masignani V."/>
            <person name="Cieslewicz M.J."/>
            <person name="Donati C."/>
            <person name="Medini D."/>
            <person name="Ward N.L."/>
            <person name="Angiuoli S.V."/>
            <person name="Crabtree J."/>
            <person name="Jones A.L."/>
            <person name="Durkin A.S."/>
            <person name="DeBoy R.T."/>
            <person name="Davidsen T.M."/>
            <person name="Mora M."/>
            <person name="Scarselli M."/>
            <person name="Margarit y Ros I."/>
            <person name="Peterson J.D."/>
            <person name="Hauser C.R."/>
            <person name="Sundaram J.P."/>
            <person name="Nelson W.C."/>
            <person name="Madupu R."/>
            <person name="Brinkac L.M."/>
            <person name="Dodson R.J."/>
            <person name="Rosovitz M.J."/>
            <person name="Sullivan S.A."/>
            <person name="Daugherty S.C."/>
            <person name="Haft D.H."/>
            <person name="Selengut J."/>
            <person name="Gwinn M.L."/>
            <person name="Zhou L."/>
            <person name="Zafar N."/>
            <person name="Khouri H."/>
            <person name="Radune D."/>
            <person name="Dimitrov G."/>
            <person name="Watkins K."/>
            <person name="O'Connor K.J."/>
            <person name="Smith S."/>
            <person name="Utterback T.R."/>
            <person name="White O."/>
            <person name="Rubens C.E."/>
            <person name="Grandi G."/>
            <person name="Madoff L.C."/>
            <person name="Kasper D.L."/>
            <person name="Telford J.L."/>
            <person name="Wessels M.R."/>
            <person name="Rappuoli R."/>
            <person name="Fraser C.M."/>
        </authorList>
    </citation>
    <scope>NUCLEOTIDE SEQUENCE [LARGE SCALE GENOMIC DNA]</scope>
    <source>
        <strain>ATCC 27591 / A909 / CDC SS700</strain>
    </source>
</reference>
<evidence type="ECO:0000255" key="1">
    <source>
        <dbReference type="HAMAP-Rule" id="MF_00033"/>
    </source>
</evidence>
<gene>
    <name evidence="1" type="primary">murG</name>
    <name type="ordered locus">SAK_0578</name>
</gene>
<name>MURG_STRA1</name>